<keyword id="KW-0665">Pyrimidine biosynthesis</keyword>
<keyword id="KW-0808">Transferase</keyword>
<name>PYRB_BACFR</name>
<evidence type="ECO:0000255" key="1">
    <source>
        <dbReference type="HAMAP-Rule" id="MF_00001"/>
    </source>
</evidence>
<comment type="function">
    <text evidence="1">Catalyzes the condensation of carbamoyl phosphate and aspartate to form carbamoyl aspartate and inorganic phosphate, the committed step in the de novo pyrimidine nucleotide biosynthesis pathway.</text>
</comment>
<comment type="catalytic activity">
    <reaction evidence="1">
        <text>carbamoyl phosphate + L-aspartate = N-carbamoyl-L-aspartate + phosphate + H(+)</text>
        <dbReference type="Rhea" id="RHEA:20013"/>
        <dbReference type="ChEBI" id="CHEBI:15378"/>
        <dbReference type="ChEBI" id="CHEBI:29991"/>
        <dbReference type="ChEBI" id="CHEBI:32814"/>
        <dbReference type="ChEBI" id="CHEBI:43474"/>
        <dbReference type="ChEBI" id="CHEBI:58228"/>
        <dbReference type="EC" id="2.1.3.2"/>
    </reaction>
</comment>
<comment type="pathway">
    <text evidence="1">Pyrimidine metabolism; UMP biosynthesis via de novo pathway; (S)-dihydroorotate from bicarbonate: step 2/3.</text>
</comment>
<comment type="subunit">
    <text evidence="1">Heterododecamer (2C3:3R2) of six catalytic PyrB chains organized as two trimers (C3), and six regulatory PyrI chains organized as three dimers (R2).</text>
</comment>
<comment type="similarity">
    <text evidence="1">Belongs to the aspartate/ornithine carbamoyltransferase superfamily. ATCase family.</text>
</comment>
<gene>
    <name evidence="1" type="primary">pyrB</name>
    <name type="ordered locus">BF2208</name>
</gene>
<dbReference type="EC" id="2.1.3.2" evidence="1"/>
<dbReference type="EMBL" id="AP006841">
    <property type="protein sequence ID" value="BAD48955.1"/>
    <property type="molecule type" value="Genomic_DNA"/>
</dbReference>
<dbReference type="RefSeq" id="WP_005787548.1">
    <property type="nucleotide sequence ID" value="NZ_UYXF01000015.1"/>
</dbReference>
<dbReference type="RefSeq" id="YP_099489.1">
    <property type="nucleotide sequence ID" value="NC_006347.1"/>
</dbReference>
<dbReference type="SMR" id="Q64U74"/>
<dbReference type="STRING" id="295405.BF2208"/>
<dbReference type="GeneID" id="60370040"/>
<dbReference type="KEGG" id="bfr:BF2208"/>
<dbReference type="PATRIC" id="fig|295405.11.peg.2146"/>
<dbReference type="HOGENOM" id="CLU_043846_1_2_10"/>
<dbReference type="OrthoDB" id="9774690at2"/>
<dbReference type="UniPathway" id="UPA00070">
    <property type="reaction ID" value="UER00116"/>
</dbReference>
<dbReference type="Proteomes" id="UP000002197">
    <property type="component" value="Chromosome"/>
</dbReference>
<dbReference type="GO" id="GO:0005829">
    <property type="term" value="C:cytosol"/>
    <property type="evidence" value="ECO:0007669"/>
    <property type="project" value="TreeGrafter"/>
</dbReference>
<dbReference type="GO" id="GO:0016597">
    <property type="term" value="F:amino acid binding"/>
    <property type="evidence" value="ECO:0007669"/>
    <property type="project" value="InterPro"/>
</dbReference>
<dbReference type="GO" id="GO:0004070">
    <property type="term" value="F:aspartate carbamoyltransferase activity"/>
    <property type="evidence" value="ECO:0007669"/>
    <property type="project" value="UniProtKB-UniRule"/>
</dbReference>
<dbReference type="GO" id="GO:0006207">
    <property type="term" value="P:'de novo' pyrimidine nucleobase biosynthetic process"/>
    <property type="evidence" value="ECO:0007669"/>
    <property type="project" value="InterPro"/>
</dbReference>
<dbReference type="GO" id="GO:0044205">
    <property type="term" value="P:'de novo' UMP biosynthetic process"/>
    <property type="evidence" value="ECO:0007669"/>
    <property type="project" value="UniProtKB-UniRule"/>
</dbReference>
<dbReference type="GO" id="GO:0006520">
    <property type="term" value="P:amino acid metabolic process"/>
    <property type="evidence" value="ECO:0007669"/>
    <property type="project" value="InterPro"/>
</dbReference>
<dbReference type="FunFam" id="3.40.50.1370:FF:000001">
    <property type="entry name" value="Aspartate carbamoyltransferase"/>
    <property type="match status" value="1"/>
</dbReference>
<dbReference type="FunFam" id="3.40.50.1370:FF:000002">
    <property type="entry name" value="Aspartate carbamoyltransferase 2"/>
    <property type="match status" value="1"/>
</dbReference>
<dbReference type="Gene3D" id="3.40.50.1370">
    <property type="entry name" value="Aspartate/ornithine carbamoyltransferase"/>
    <property type="match status" value="2"/>
</dbReference>
<dbReference type="HAMAP" id="MF_00001">
    <property type="entry name" value="Asp_carb_tr"/>
    <property type="match status" value="1"/>
</dbReference>
<dbReference type="InterPro" id="IPR006132">
    <property type="entry name" value="Asp/Orn_carbamoyltranf_P-bd"/>
</dbReference>
<dbReference type="InterPro" id="IPR006130">
    <property type="entry name" value="Asp/Orn_carbamoylTrfase"/>
</dbReference>
<dbReference type="InterPro" id="IPR036901">
    <property type="entry name" value="Asp/Orn_carbamoylTrfase_sf"/>
</dbReference>
<dbReference type="InterPro" id="IPR002082">
    <property type="entry name" value="Asp_carbamoyltransf"/>
</dbReference>
<dbReference type="InterPro" id="IPR006131">
    <property type="entry name" value="Asp_carbamoyltransf_Asp/Orn-bd"/>
</dbReference>
<dbReference type="NCBIfam" id="TIGR00670">
    <property type="entry name" value="asp_carb_tr"/>
    <property type="match status" value="1"/>
</dbReference>
<dbReference type="NCBIfam" id="NF002032">
    <property type="entry name" value="PRK00856.1"/>
    <property type="match status" value="1"/>
</dbReference>
<dbReference type="PANTHER" id="PTHR45753:SF6">
    <property type="entry name" value="ASPARTATE CARBAMOYLTRANSFERASE"/>
    <property type="match status" value="1"/>
</dbReference>
<dbReference type="PANTHER" id="PTHR45753">
    <property type="entry name" value="ORNITHINE CARBAMOYLTRANSFERASE, MITOCHONDRIAL"/>
    <property type="match status" value="1"/>
</dbReference>
<dbReference type="Pfam" id="PF00185">
    <property type="entry name" value="OTCace"/>
    <property type="match status" value="1"/>
</dbReference>
<dbReference type="Pfam" id="PF02729">
    <property type="entry name" value="OTCace_N"/>
    <property type="match status" value="1"/>
</dbReference>
<dbReference type="PRINTS" id="PR00100">
    <property type="entry name" value="AOTCASE"/>
</dbReference>
<dbReference type="PRINTS" id="PR00101">
    <property type="entry name" value="ATCASE"/>
</dbReference>
<dbReference type="SUPFAM" id="SSF53671">
    <property type="entry name" value="Aspartate/ornithine carbamoyltransferase"/>
    <property type="match status" value="1"/>
</dbReference>
<dbReference type="PROSITE" id="PS00097">
    <property type="entry name" value="CARBAMOYLTRANSFERASE"/>
    <property type="match status" value="1"/>
</dbReference>
<protein>
    <recommendedName>
        <fullName evidence="1">Aspartate carbamoyltransferase catalytic subunit</fullName>
        <ecNumber evidence="1">2.1.3.2</ecNumber>
    </recommendedName>
    <alternativeName>
        <fullName evidence="1">Aspartate transcarbamylase</fullName>
        <shortName evidence="1">ATCase</shortName>
    </alternativeName>
</protein>
<organism>
    <name type="scientific">Bacteroides fragilis (strain YCH46)</name>
    <dbReference type="NCBI Taxonomy" id="295405"/>
    <lineage>
        <taxon>Bacteria</taxon>
        <taxon>Pseudomonadati</taxon>
        <taxon>Bacteroidota</taxon>
        <taxon>Bacteroidia</taxon>
        <taxon>Bacteroidales</taxon>
        <taxon>Bacteroidaceae</taxon>
        <taxon>Bacteroides</taxon>
    </lineage>
</organism>
<accession>Q64U74</accession>
<feature type="chain" id="PRO_0000113094" description="Aspartate carbamoyltransferase catalytic subunit">
    <location>
        <begin position="1"/>
        <end position="308"/>
    </location>
</feature>
<feature type="binding site" evidence="1">
    <location>
        <position position="51"/>
    </location>
    <ligand>
        <name>carbamoyl phosphate</name>
        <dbReference type="ChEBI" id="CHEBI:58228"/>
    </ligand>
</feature>
<feature type="binding site" evidence="1">
    <location>
        <position position="52"/>
    </location>
    <ligand>
        <name>carbamoyl phosphate</name>
        <dbReference type="ChEBI" id="CHEBI:58228"/>
    </ligand>
</feature>
<feature type="binding site" evidence="1">
    <location>
        <position position="80"/>
    </location>
    <ligand>
        <name>L-aspartate</name>
        <dbReference type="ChEBI" id="CHEBI:29991"/>
    </ligand>
</feature>
<feature type="binding site" evidence="1">
    <location>
        <position position="101"/>
    </location>
    <ligand>
        <name>carbamoyl phosphate</name>
        <dbReference type="ChEBI" id="CHEBI:58228"/>
    </ligand>
</feature>
<feature type="binding site" evidence="1">
    <location>
        <position position="129"/>
    </location>
    <ligand>
        <name>carbamoyl phosphate</name>
        <dbReference type="ChEBI" id="CHEBI:58228"/>
    </ligand>
</feature>
<feature type="binding site" evidence="1">
    <location>
        <position position="132"/>
    </location>
    <ligand>
        <name>carbamoyl phosphate</name>
        <dbReference type="ChEBI" id="CHEBI:58228"/>
    </ligand>
</feature>
<feature type="binding site" evidence="1">
    <location>
        <position position="162"/>
    </location>
    <ligand>
        <name>L-aspartate</name>
        <dbReference type="ChEBI" id="CHEBI:29991"/>
    </ligand>
</feature>
<feature type="binding site" evidence="1">
    <location>
        <position position="224"/>
    </location>
    <ligand>
        <name>L-aspartate</name>
        <dbReference type="ChEBI" id="CHEBI:29991"/>
    </ligand>
</feature>
<feature type="binding site" evidence="1">
    <location>
        <position position="263"/>
    </location>
    <ligand>
        <name>carbamoyl phosphate</name>
        <dbReference type="ChEBI" id="CHEBI:58228"/>
    </ligand>
</feature>
<feature type="binding site" evidence="1">
    <location>
        <position position="264"/>
    </location>
    <ligand>
        <name>carbamoyl phosphate</name>
        <dbReference type="ChEBI" id="CHEBI:58228"/>
    </ligand>
</feature>
<sequence>MENRSLVTIAEHSREKILYMLEMAKQFEKNPNRRLLEGKVVATLFFEPSTRTRLSFETAANRLGARVIGFSDPKATSSSKGETLKDTIMMVSNYADVIVMRHYLEGAARYASEVAPVPIVNAGDGANQHPSQTMLDLYSIYKTQGTLENLNIYLVGDLKYGRTVHSLLMAMRHFNPTFHFIAPEELKMPEEYKIYCKEHNIKYVEHTDFNEEVIKDADILYMTRVQRERFTDLMEYERVKNVYILKAKMLENTRSNLRILHPLPRVNEIAYDVDDSPKAYYFQQAQNGLYARQAILCDVLGITLQDIL</sequence>
<reference key="1">
    <citation type="journal article" date="2004" name="Proc. Natl. Acad. Sci. U.S.A.">
        <title>Genomic analysis of Bacteroides fragilis reveals extensive DNA inversions regulating cell surface adaptation.</title>
        <authorList>
            <person name="Kuwahara T."/>
            <person name="Yamashita A."/>
            <person name="Hirakawa H."/>
            <person name="Nakayama H."/>
            <person name="Toh H."/>
            <person name="Okada N."/>
            <person name="Kuhara S."/>
            <person name="Hattori M."/>
            <person name="Hayashi T."/>
            <person name="Ohnishi Y."/>
        </authorList>
    </citation>
    <scope>NUCLEOTIDE SEQUENCE [LARGE SCALE GENOMIC DNA]</scope>
    <source>
        <strain>YCH46</strain>
    </source>
</reference>
<proteinExistence type="inferred from homology"/>